<organismHost>
    <name type="scientific">Acheta domesticus</name>
    <name type="common">House cricket</name>
    <dbReference type="NCBI Taxonomy" id="6997"/>
</organismHost>
<organismHost>
    <name type="scientific">Chilo suppressalis</name>
    <name type="common">Asiatic rice borer moth</name>
    <dbReference type="NCBI Taxonomy" id="168631"/>
</organismHost>
<organismHost>
    <name type="scientific">Gryllus bimaculatus</name>
    <name type="common">Two-spotted cricket</name>
    <dbReference type="NCBI Taxonomy" id="6999"/>
</organismHost>
<organismHost>
    <name type="scientific">Gryllus campestris</name>
    <dbReference type="NCBI Taxonomy" id="58607"/>
</organismHost>
<organismHost>
    <name type="scientific">Spodoptera frugiperda</name>
    <name type="common">Fall armyworm</name>
    <dbReference type="NCBI Taxonomy" id="7108"/>
</organismHost>
<sequence length="92" mass="10605">MNPAIVVIIVLLVAALLIWACKAKKLDGLFNFGDPYYTSTVTPSVSPTTVLVTPPVPAAYPMYDVNYRYPFGVPWDIDVDRRRRYNWGRWRR</sequence>
<organism>
    <name type="scientific">Invertebrate iridescent virus 6</name>
    <name type="common">IIV-6</name>
    <name type="synonym">Chilo iridescent virus</name>
    <dbReference type="NCBI Taxonomy" id="176652"/>
    <lineage>
        <taxon>Viruses</taxon>
        <taxon>Varidnaviria</taxon>
        <taxon>Bamfordvirae</taxon>
        <taxon>Nucleocytoviricota</taxon>
        <taxon>Megaviricetes</taxon>
        <taxon>Pimascovirales</taxon>
        <taxon>Iridoviridae</taxon>
        <taxon>Betairidovirinae</taxon>
        <taxon>Iridovirus</taxon>
    </lineage>
</organism>
<evidence type="ECO:0000255" key="1"/>
<keyword id="KW-1185">Reference proteome</keyword>
<keyword id="KW-0732">Signal</keyword>
<gene>
    <name type="ORF">IIV6-312R</name>
</gene>
<protein>
    <recommendedName>
        <fullName>Uncharacterized protein 312R</fullName>
    </recommendedName>
</protein>
<feature type="signal peptide" evidence="1">
    <location>
        <begin position="1"/>
        <end position="23"/>
    </location>
</feature>
<feature type="chain" id="PRO_0000377854" description="Uncharacterized protein 312R">
    <location>
        <begin position="24"/>
        <end position="92"/>
    </location>
</feature>
<accession>Q91FL2</accession>
<reference key="1">
    <citation type="journal article" date="2001" name="Virology">
        <title>Analysis of the first complete DNA sequence of an invertebrate iridovirus: coding strategy of the genome of Chilo iridescent virus.</title>
        <authorList>
            <person name="Jakob N.J."/>
            <person name="Mueller K."/>
            <person name="Bahr U."/>
            <person name="Darai G."/>
        </authorList>
    </citation>
    <scope>NUCLEOTIDE SEQUENCE [LARGE SCALE GENOMIC DNA]</scope>
</reference>
<reference key="2">
    <citation type="journal article" date="2007" name="Virol. J.">
        <title>Comparative genomic analysis of the family Iridoviridae: re-annotating and defining the core set of iridovirus genes.</title>
        <authorList>
            <person name="Eaton H.E."/>
            <person name="Metcalf J."/>
            <person name="Penny E."/>
            <person name="Tcherepanov V."/>
            <person name="Upton C."/>
            <person name="Brunetti C.R."/>
        </authorList>
    </citation>
    <scope>GENOME REANNOTATION</scope>
</reference>
<name>312R_IIV6</name>
<dbReference type="EMBL" id="AF303741">
    <property type="protein sequence ID" value="AAK82173.1"/>
    <property type="molecule type" value="Genomic_DNA"/>
</dbReference>
<dbReference type="RefSeq" id="NP_149775.1">
    <property type="nucleotide sequence ID" value="NC_003038.1"/>
</dbReference>
<dbReference type="SMR" id="Q91FL2"/>
<dbReference type="KEGG" id="vg:1733417"/>
<dbReference type="Proteomes" id="UP000001359">
    <property type="component" value="Genome"/>
</dbReference>
<proteinExistence type="inferred from homology"/>